<comment type="function">
    <text evidence="1">CRISPR (clustered regularly interspaced short palindromic repeat), is an adaptive immune system that provides protection against mobile genetic elements (viruses, transposable elements and conjugative plasmids). CRISPR clusters contain sequences complementary to antecedent mobile elements and target invading nucleic acids. CRISPR clusters are transcribed and processed into CRISPR RNA (crRNA). Functions as a ssRNA-specific endoribonuclease. Involved in the integration of spacer DNA into the CRISPR cassette.</text>
</comment>
<comment type="cofactor">
    <cofactor evidence="1">
        <name>Mg(2+)</name>
        <dbReference type="ChEBI" id="CHEBI:18420"/>
    </cofactor>
</comment>
<comment type="subunit">
    <text evidence="1">Homodimer, forms a heterotetramer with a Cas1 homodimer.</text>
</comment>
<comment type="similarity">
    <text evidence="1">Belongs to the CRISPR-associated endoribonuclease Cas2 protein family.</text>
</comment>
<dbReference type="EC" id="3.1.-.-" evidence="1"/>
<dbReference type="EMBL" id="AE017199">
    <property type="protein sequence ID" value="AAR38871.1"/>
    <property type="molecule type" value="Genomic_DNA"/>
</dbReference>
<dbReference type="SMR" id="Q74N46"/>
<dbReference type="STRING" id="228908.NEQ016"/>
<dbReference type="EnsemblBacteria" id="AAR38871">
    <property type="protein sequence ID" value="AAR38871"/>
    <property type="gene ID" value="NEQ016"/>
</dbReference>
<dbReference type="KEGG" id="neq:NEQ016"/>
<dbReference type="PATRIC" id="fig|228908.8.peg.15"/>
<dbReference type="HOGENOM" id="CLU_161124_0_1_2"/>
<dbReference type="Proteomes" id="UP000000578">
    <property type="component" value="Chromosome"/>
</dbReference>
<dbReference type="GO" id="GO:0046872">
    <property type="term" value="F:metal ion binding"/>
    <property type="evidence" value="ECO:0007669"/>
    <property type="project" value="UniProtKB-UniRule"/>
</dbReference>
<dbReference type="GO" id="GO:0004521">
    <property type="term" value="F:RNA endonuclease activity"/>
    <property type="evidence" value="ECO:0007669"/>
    <property type="project" value="InterPro"/>
</dbReference>
<dbReference type="GO" id="GO:0051607">
    <property type="term" value="P:defense response to virus"/>
    <property type="evidence" value="ECO:0007669"/>
    <property type="project" value="UniProtKB-UniRule"/>
</dbReference>
<dbReference type="GO" id="GO:0043571">
    <property type="term" value="P:maintenance of CRISPR repeat elements"/>
    <property type="evidence" value="ECO:0007669"/>
    <property type="project" value="UniProtKB-UniRule"/>
</dbReference>
<dbReference type="CDD" id="cd09725">
    <property type="entry name" value="Cas2_I_II_III"/>
    <property type="match status" value="1"/>
</dbReference>
<dbReference type="Gene3D" id="3.30.70.240">
    <property type="match status" value="1"/>
</dbReference>
<dbReference type="HAMAP" id="MF_01471">
    <property type="entry name" value="Cas2"/>
    <property type="match status" value="1"/>
</dbReference>
<dbReference type="InterPro" id="IPR021127">
    <property type="entry name" value="CRISPR_associated_Cas2"/>
</dbReference>
<dbReference type="InterPro" id="IPR019199">
    <property type="entry name" value="Virulence_VapD/CRISPR_Cas2"/>
</dbReference>
<dbReference type="NCBIfam" id="TIGR01573">
    <property type="entry name" value="cas2"/>
    <property type="match status" value="1"/>
</dbReference>
<dbReference type="PANTHER" id="PTHR34405">
    <property type="entry name" value="CRISPR-ASSOCIATED ENDORIBONUCLEASE CAS2"/>
    <property type="match status" value="1"/>
</dbReference>
<dbReference type="Pfam" id="PF09827">
    <property type="entry name" value="CRISPR_Cas2"/>
    <property type="match status" value="1"/>
</dbReference>
<dbReference type="SUPFAM" id="SSF143430">
    <property type="entry name" value="TTP0101/SSO1404-like"/>
    <property type="match status" value="1"/>
</dbReference>
<accession>Q74N46</accession>
<gene>
    <name evidence="1" type="primary">cas2</name>
    <name type="ordered locus">NEQ016</name>
</gene>
<protein>
    <recommendedName>
        <fullName evidence="1">CRISPR-associated endoribonuclease Cas2</fullName>
        <ecNumber evidence="1">3.1.-.-</ecNumber>
    </recommendedName>
</protein>
<proteinExistence type="inferred from homology"/>
<organism>
    <name type="scientific">Nanoarchaeum equitans (strain Kin4-M)</name>
    <dbReference type="NCBI Taxonomy" id="228908"/>
    <lineage>
        <taxon>Archaea</taxon>
        <taxon>Nanobdellota</taxon>
        <taxon>Candidatus Nanoarchaeia</taxon>
        <taxon>Nanoarchaeales</taxon>
        <taxon>Nanoarchaeaceae</taxon>
        <taxon>Nanoarchaeum</taxon>
    </lineage>
</organism>
<evidence type="ECO:0000255" key="1">
    <source>
        <dbReference type="HAMAP-Rule" id="MF_01471"/>
    </source>
</evidence>
<reference key="1">
    <citation type="journal article" date="2003" name="Proc. Natl. Acad. Sci. U.S.A.">
        <title>The genome of Nanoarchaeum equitans: insights into early archaeal evolution and derived parasitism.</title>
        <authorList>
            <person name="Waters E."/>
            <person name="Hohn M.J."/>
            <person name="Ahel I."/>
            <person name="Graham D.E."/>
            <person name="Adams M.D."/>
            <person name="Barnstead M."/>
            <person name="Beeson K.Y."/>
            <person name="Bibbs L."/>
            <person name="Bolanos R."/>
            <person name="Keller M."/>
            <person name="Kretz K."/>
            <person name="Lin X."/>
            <person name="Mathur E."/>
            <person name="Ni J."/>
            <person name="Podar M."/>
            <person name="Richardson T."/>
            <person name="Sutton G.G."/>
            <person name="Simon M."/>
            <person name="Soell D."/>
            <person name="Stetter K.O."/>
            <person name="Short J.M."/>
            <person name="Noorderwier M."/>
        </authorList>
    </citation>
    <scope>NUCLEOTIDE SEQUENCE [LARGE SCALE GENOMIC DNA]</scope>
    <source>
        <strain>Kin4-M</strain>
    </source>
</reference>
<sequence length="91" mass="10915">MQYKINMYAIVVYDVNVSRQNQIREFLRKYLYHVQRSVFEGEISPSSLYYMKKILQSYIGETDSLIIYVLRDKSCLMDKIVLGEDKDLQIY</sequence>
<name>CAS2_NANEQ</name>
<feature type="chain" id="PRO_0000417748" description="CRISPR-associated endoribonuclease Cas2">
    <location>
        <begin position="1"/>
        <end position="91"/>
    </location>
</feature>
<feature type="binding site" evidence="1">
    <location>
        <position position="14"/>
    </location>
    <ligand>
        <name>Mg(2+)</name>
        <dbReference type="ChEBI" id="CHEBI:18420"/>
        <note>catalytic</note>
    </ligand>
</feature>
<keyword id="KW-0051">Antiviral defense</keyword>
<keyword id="KW-0255">Endonuclease</keyword>
<keyword id="KW-0378">Hydrolase</keyword>
<keyword id="KW-0460">Magnesium</keyword>
<keyword id="KW-0479">Metal-binding</keyword>
<keyword id="KW-0540">Nuclease</keyword>
<keyword id="KW-1185">Reference proteome</keyword>